<feature type="chain" id="PRO_0000135990" description="Shikimate dehydrogenase (NADP(+))">
    <location>
        <begin position="1"/>
        <end position="269"/>
    </location>
</feature>
<feature type="active site" description="Proton acceptor" evidence="1 4">
    <location>
        <position position="70"/>
    </location>
</feature>
<feature type="binding site" evidence="1 2">
    <location>
        <begin position="19"/>
        <end position="21"/>
    </location>
    <ligand>
        <name>shikimate</name>
        <dbReference type="ChEBI" id="CHEBI:36208"/>
    </ligand>
</feature>
<feature type="binding site" evidence="1">
    <location>
        <position position="66"/>
    </location>
    <ligand>
        <name>shikimate</name>
        <dbReference type="ChEBI" id="CHEBI:36208"/>
    </ligand>
</feature>
<feature type="binding site" evidence="1 2">
    <location>
        <position position="82"/>
    </location>
    <ligand>
        <name>NADP(+)</name>
        <dbReference type="ChEBI" id="CHEBI:58349"/>
    </ligand>
</feature>
<feature type="binding site" evidence="1 2">
    <location>
        <position position="91"/>
    </location>
    <ligand>
        <name>shikimate</name>
        <dbReference type="ChEBI" id="CHEBI:36208"/>
    </ligand>
</feature>
<feature type="binding site" evidence="1 2">
    <location>
        <position position="106"/>
    </location>
    <ligand>
        <name>shikimate</name>
        <dbReference type="ChEBI" id="CHEBI:36208"/>
    </ligand>
</feature>
<feature type="binding site" evidence="1 2">
    <location>
        <begin position="130"/>
        <end position="134"/>
    </location>
    <ligand>
        <name>NADP(+)</name>
        <dbReference type="ChEBI" id="CHEBI:58349"/>
    </ligand>
</feature>
<feature type="binding site" evidence="1 4">
    <location>
        <begin position="153"/>
        <end position="158"/>
    </location>
    <ligand>
        <name>NADP(+)</name>
        <dbReference type="ChEBI" id="CHEBI:58349"/>
    </ligand>
</feature>
<feature type="binding site" evidence="1 2">
    <location>
        <position position="214"/>
    </location>
    <ligand>
        <name>NADP(+)</name>
        <dbReference type="ChEBI" id="CHEBI:58349"/>
    </ligand>
</feature>
<feature type="binding site" evidence="1 2">
    <location>
        <position position="216"/>
    </location>
    <ligand>
        <name>shikimate</name>
        <dbReference type="ChEBI" id="CHEBI:36208"/>
    </ligand>
</feature>
<feature type="binding site" evidence="1 2">
    <location>
        <position position="235"/>
    </location>
    <ligand>
        <name>NADP(+)</name>
        <dbReference type="ChEBI" id="CHEBI:58349"/>
    </ligand>
</feature>
<feature type="binding site" evidence="1 2">
    <location>
        <position position="242"/>
    </location>
    <ligand>
        <name>shikimate</name>
        <dbReference type="ChEBI" id="CHEBI:36208"/>
    </ligand>
</feature>
<feature type="strand" evidence="5">
    <location>
        <begin position="7"/>
        <end position="15"/>
    </location>
</feature>
<feature type="helix" evidence="5">
    <location>
        <begin position="21"/>
        <end position="32"/>
    </location>
</feature>
<feature type="strand" evidence="5">
    <location>
        <begin position="35"/>
        <end position="42"/>
    </location>
</feature>
<feature type="helix" evidence="5">
    <location>
        <begin position="45"/>
        <end position="47"/>
    </location>
</feature>
<feature type="helix" evidence="5">
    <location>
        <begin position="48"/>
        <end position="58"/>
    </location>
</feature>
<feature type="strand" evidence="5">
    <location>
        <begin position="62"/>
        <end position="65"/>
    </location>
</feature>
<feature type="turn" evidence="5">
    <location>
        <begin position="70"/>
        <end position="73"/>
    </location>
</feature>
<feature type="helix" evidence="5">
    <location>
        <begin position="74"/>
        <end position="76"/>
    </location>
</feature>
<feature type="strand" evidence="5">
    <location>
        <begin position="78"/>
        <end position="80"/>
    </location>
</feature>
<feature type="helix" evidence="5">
    <location>
        <begin position="82"/>
        <end position="87"/>
    </location>
</feature>
<feature type="strand" evidence="5">
    <location>
        <begin position="92"/>
        <end position="96"/>
    </location>
</feature>
<feature type="strand" evidence="5">
    <location>
        <begin position="99"/>
        <end position="103"/>
    </location>
</feature>
<feature type="helix" evidence="5">
    <location>
        <begin position="106"/>
        <end position="117"/>
    </location>
</feature>
<feature type="helix" evidence="5">
    <location>
        <begin position="121"/>
        <end position="123"/>
    </location>
</feature>
<feature type="strand" evidence="5">
    <location>
        <begin position="124"/>
        <end position="129"/>
    </location>
</feature>
<feature type="helix" evidence="5">
    <location>
        <begin position="133"/>
        <end position="145"/>
    </location>
</feature>
<feature type="strand" evidence="5">
    <location>
        <begin position="148"/>
        <end position="152"/>
    </location>
</feature>
<feature type="helix" evidence="5">
    <location>
        <begin position="156"/>
        <end position="162"/>
    </location>
</feature>
<feature type="turn" evidence="5">
    <location>
        <begin position="163"/>
        <end position="165"/>
    </location>
</feature>
<feature type="strand" evidence="5">
    <location>
        <begin position="168"/>
        <end position="170"/>
    </location>
</feature>
<feature type="helix" evidence="5">
    <location>
        <begin position="174"/>
        <end position="176"/>
    </location>
</feature>
<feature type="helix" evidence="5">
    <location>
        <begin position="178"/>
        <end position="180"/>
    </location>
</feature>
<feature type="strand" evidence="5">
    <location>
        <begin position="182"/>
        <end position="186"/>
    </location>
</feature>
<feature type="helix" evidence="5">
    <location>
        <begin position="202"/>
        <end position="204"/>
    </location>
</feature>
<feature type="strand" evidence="5">
    <location>
        <begin position="209"/>
        <end position="217"/>
    </location>
</feature>
<feature type="helix" evidence="5">
    <location>
        <begin position="220"/>
        <end position="227"/>
    </location>
</feature>
<feature type="strand" evidence="5">
    <location>
        <begin position="231"/>
        <end position="233"/>
    </location>
</feature>
<feature type="helix" evidence="5">
    <location>
        <begin position="236"/>
        <end position="251"/>
    </location>
</feature>
<feature type="helix" evidence="5">
    <location>
        <begin position="257"/>
        <end position="268"/>
    </location>
</feature>
<proteinExistence type="evidence at protein level"/>
<protein>
    <recommendedName>
        <fullName evidence="1 3">Shikimate dehydrogenase (NADP(+))</fullName>
        <shortName evidence="3">SD</shortName>
        <shortName evidence="1 3">SDH</shortName>
        <ecNumber evidence="1 2">1.1.1.25</ecNumber>
    </recommendedName>
</protein>
<name>AROE_AQUAE</name>
<reference key="1">
    <citation type="journal article" date="1998" name="Nature">
        <title>The complete genome of the hyperthermophilic bacterium Aquifex aeolicus.</title>
        <authorList>
            <person name="Deckert G."/>
            <person name="Warren P.V."/>
            <person name="Gaasterland T."/>
            <person name="Young W.G."/>
            <person name="Lenox A.L."/>
            <person name="Graham D.E."/>
            <person name="Overbeek R."/>
            <person name="Snead M.A."/>
            <person name="Keller M."/>
            <person name="Aujay M."/>
            <person name="Huber R."/>
            <person name="Feldman R.A."/>
            <person name="Short J.M."/>
            <person name="Olsen G.J."/>
            <person name="Swanson R.V."/>
        </authorList>
    </citation>
    <scope>NUCLEOTIDE SEQUENCE [LARGE SCALE GENOMIC DNA]</scope>
    <source>
        <strain>VF5</strain>
    </source>
</reference>
<reference key="2">
    <citation type="journal article" date="2007" name="Biochemistry">
        <title>Structural and biochemical analyses of shikimate dehydrogenase AroE from Aquifex aeolicus: implications for the catalytic mechanism.</title>
        <authorList>
            <person name="Gan J."/>
            <person name="Wu Y."/>
            <person name="Prabakaran P."/>
            <person name="Gu Y."/>
            <person name="Li Y."/>
            <person name="Andrykovitch M."/>
            <person name="Liu H."/>
            <person name="Gong Y."/>
            <person name="Yan H."/>
            <person name="Ji X."/>
        </authorList>
    </citation>
    <scope>X-RAY CRYSTALLOGRAPHY (2.2 ANGSTROMS) IN COMPLEX WITH SHIKIMATE AND NADP</scope>
    <scope>FUNCTION</scope>
    <scope>CATALYTIC ACTIVITY</scope>
    <scope>BIOPHYSICOCHEMICAL PROPERTIES</scope>
    <scope>ACTIVE SITE</scope>
    <scope>REACTION MECHANISM</scope>
    <scope>SUBUNIT</scope>
</reference>
<accession>O67049</accession>
<gene>
    <name evidence="1 3" type="primary">aroE</name>
    <name type="ordered locus">aq_901</name>
</gene>
<keyword id="KW-0002">3D-structure</keyword>
<keyword id="KW-0028">Amino-acid biosynthesis</keyword>
<keyword id="KW-0057">Aromatic amino acid biosynthesis</keyword>
<keyword id="KW-0521">NADP</keyword>
<keyword id="KW-0560">Oxidoreductase</keyword>
<keyword id="KW-1185">Reference proteome</keyword>
<comment type="function">
    <text evidence="1 2">Involved in the biosynthesis of the chorismate, which leads to the biosynthesis of aromatic amino acids. Catalyzes the reversible NADPH linked reduction of 3-dehydroshikimate (DHSA) to yield shikimate (SA).</text>
</comment>
<comment type="catalytic activity">
    <reaction evidence="1 2">
        <text>shikimate + NADP(+) = 3-dehydroshikimate + NADPH + H(+)</text>
        <dbReference type="Rhea" id="RHEA:17737"/>
        <dbReference type="ChEBI" id="CHEBI:15378"/>
        <dbReference type="ChEBI" id="CHEBI:16630"/>
        <dbReference type="ChEBI" id="CHEBI:36208"/>
        <dbReference type="ChEBI" id="CHEBI:57783"/>
        <dbReference type="ChEBI" id="CHEBI:58349"/>
        <dbReference type="EC" id="1.1.1.25"/>
    </reaction>
</comment>
<comment type="biophysicochemical properties">
    <kinetics>
        <KM evidence="2">42.4 uM for shikimate (at pH 9 and 25 degrees Celsius)</KM>
        <KM evidence="2">42.4 uM for NADP (at pH 9 and 25 degrees Celsius)</KM>
        <text evidence="2">kcat is 55.5 sec(-1) for dehydrogenase activity (at pH 9 and 25 degrees Celsius).</text>
    </kinetics>
</comment>
<comment type="pathway">
    <text evidence="1">Metabolic intermediate biosynthesis; chorismate biosynthesis; chorismate from D-erythrose 4-phosphate and phosphoenolpyruvate: step 4/7.</text>
</comment>
<comment type="subunit">
    <text evidence="1 2">Homodimer.</text>
</comment>
<comment type="miscellaneous">
    <text evidence="3">AroE is dependent on the hydrogen ion concentration of the environment. A low pH environment favors the formation of SA and NADP, whereas a high pH condition favors the formation of DHSA and NADPH.</text>
</comment>
<comment type="similarity">
    <text evidence="1">Belongs to the shikimate dehydrogenase family.</text>
</comment>
<sequence>MINAQTQLYGVIGFPVKHSLSPVFQNALIRYAGLNAVYLAFEINPEELKKAFEGFKALKVKGINVTVPFKEEIIPLLDYVEDTAKEIGAVNTVKFENGKAYGYNTDWIGFLKSLKSLIPEVKEKSILVLGAGGASRAVIYALVKEGAKVFLWNRTKEKAIKLAQKFPLEVVNSPEEVIDKVQVIVNTTSVGLKDKDPEIFNYDLIKKDHVVVDIIYKETKLLKKAKEKGAKLFDGLPMLLWQGIEAFKIWNGCEVPYSVAERSVRDLRG</sequence>
<dbReference type="EC" id="1.1.1.25" evidence="1 2"/>
<dbReference type="EMBL" id="AE000657">
    <property type="protein sequence ID" value="AAC07007.1"/>
    <property type="molecule type" value="Genomic_DNA"/>
</dbReference>
<dbReference type="PIR" id="F70377">
    <property type="entry name" value="F70377"/>
</dbReference>
<dbReference type="RefSeq" id="NP_213611.1">
    <property type="nucleotide sequence ID" value="NC_000918.1"/>
</dbReference>
<dbReference type="RefSeq" id="WP_010880549.1">
    <property type="nucleotide sequence ID" value="NC_000918.1"/>
</dbReference>
<dbReference type="PDB" id="2HK7">
    <property type="method" value="X-ray"/>
    <property type="resolution" value="2.50 A"/>
    <property type="chains" value="A/B=1-269"/>
</dbReference>
<dbReference type="PDB" id="2HK8">
    <property type="method" value="X-ray"/>
    <property type="resolution" value="2.35 A"/>
    <property type="chains" value="A/B/C/D/E/F/G/H=1-269"/>
</dbReference>
<dbReference type="PDB" id="2HK9">
    <property type="method" value="X-ray"/>
    <property type="resolution" value="2.20 A"/>
    <property type="chains" value="A/B/C/D=1-269"/>
</dbReference>
<dbReference type="PDBsum" id="2HK7"/>
<dbReference type="PDBsum" id="2HK8"/>
<dbReference type="PDBsum" id="2HK9"/>
<dbReference type="SMR" id="O67049"/>
<dbReference type="FunCoup" id="O67049">
    <property type="interactions" value="159"/>
</dbReference>
<dbReference type="STRING" id="224324.aq_901"/>
<dbReference type="EnsemblBacteria" id="AAC07007">
    <property type="protein sequence ID" value="AAC07007"/>
    <property type="gene ID" value="aq_901"/>
</dbReference>
<dbReference type="KEGG" id="aae:aq_901"/>
<dbReference type="PATRIC" id="fig|224324.8.peg.703"/>
<dbReference type="eggNOG" id="COG0169">
    <property type="taxonomic scope" value="Bacteria"/>
</dbReference>
<dbReference type="HOGENOM" id="CLU_044063_4_1_0"/>
<dbReference type="InParanoid" id="O67049"/>
<dbReference type="OrthoDB" id="9792692at2"/>
<dbReference type="BRENDA" id="1.1.1.25">
    <property type="organism ID" value="396"/>
</dbReference>
<dbReference type="UniPathway" id="UPA00053">
    <property type="reaction ID" value="UER00087"/>
</dbReference>
<dbReference type="EvolutionaryTrace" id="O67049"/>
<dbReference type="Proteomes" id="UP000000798">
    <property type="component" value="Chromosome"/>
</dbReference>
<dbReference type="GO" id="GO:0005829">
    <property type="term" value="C:cytosol"/>
    <property type="evidence" value="ECO:0000318"/>
    <property type="project" value="GO_Central"/>
</dbReference>
<dbReference type="GO" id="GO:0050661">
    <property type="term" value="F:NADP binding"/>
    <property type="evidence" value="ECO:0000314"/>
    <property type="project" value="UniProtKB"/>
</dbReference>
<dbReference type="GO" id="GO:0004764">
    <property type="term" value="F:shikimate 3-dehydrogenase (NADP+) activity"/>
    <property type="evidence" value="ECO:0000314"/>
    <property type="project" value="UniProtKB"/>
</dbReference>
<dbReference type="GO" id="GO:0008652">
    <property type="term" value="P:amino acid biosynthetic process"/>
    <property type="evidence" value="ECO:0007669"/>
    <property type="project" value="UniProtKB-KW"/>
</dbReference>
<dbReference type="GO" id="GO:0009073">
    <property type="term" value="P:aromatic amino acid family biosynthetic process"/>
    <property type="evidence" value="ECO:0007669"/>
    <property type="project" value="UniProtKB-KW"/>
</dbReference>
<dbReference type="GO" id="GO:0009423">
    <property type="term" value="P:chorismate biosynthetic process"/>
    <property type="evidence" value="ECO:0000314"/>
    <property type="project" value="UniProtKB"/>
</dbReference>
<dbReference type="GO" id="GO:0019632">
    <property type="term" value="P:shikimate metabolic process"/>
    <property type="evidence" value="ECO:0000314"/>
    <property type="project" value="UniProtKB"/>
</dbReference>
<dbReference type="CDD" id="cd01065">
    <property type="entry name" value="NAD_bind_Shikimate_DH"/>
    <property type="match status" value="1"/>
</dbReference>
<dbReference type="FunFam" id="3.40.50.10860:FF:000004">
    <property type="entry name" value="Quinate/shikimate dehydrogenase"/>
    <property type="match status" value="1"/>
</dbReference>
<dbReference type="FunFam" id="3.40.50.720:FF:000086">
    <property type="entry name" value="Quinate/shikimate dehydrogenase"/>
    <property type="match status" value="1"/>
</dbReference>
<dbReference type="Gene3D" id="3.40.50.10860">
    <property type="entry name" value="Leucine Dehydrogenase, chain A, domain 1"/>
    <property type="match status" value="1"/>
</dbReference>
<dbReference type="Gene3D" id="3.40.50.720">
    <property type="entry name" value="NAD(P)-binding Rossmann-like Domain"/>
    <property type="match status" value="1"/>
</dbReference>
<dbReference type="HAMAP" id="MF_00222">
    <property type="entry name" value="Shikimate_DH_AroE"/>
    <property type="match status" value="1"/>
</dbReference>
<dbReference type="InterPro" id="IPR046346">
    <property type="entry name" value="Aminoacid_DH-like_N_sf"/>
</dbReference>
<dbReference type="InterPro" id="IPR036291">
    <property type="entry name" value="NAD(P)-bd_dom_sf"/>
</dbReference>
<dbReference type="InterPro" id="IPR041121">
    <property type="entry name" value="SDH_C"/>
</dbReference>
<dbReference type="InterPro" id="IPR011342">
    <property type="entry name" value="Shikimate_DH"/>
</dbReference>
<dbReference type="InterPro" id="IPR013708">
    <property type="entry name" value="Shikimate_DH-bd_N"/>
</dbReference>
<dbReference type="InterPro" id="IPR022893">
    <property type="entry name" value="Shikimate_DH_fam"/>
</dbReference>
<dbReference type="InterPro" id="IPR006151">
    <property type="entry name" value="Shikm_DH/Glu-tRNA_Rdtase"/>
</dbReference>
<dbReference type="NCBIfam" id="TIGR00507">
    <property type="entry name" value="aroE"/>
    <property type="match status" value="1"/>
</dbReference>
<dbReference type="NCBIfam" id="NF001319">
    <property type="entry name" value="PRK00258.3-3"/>
    <property type="match status" value="1"/>
</dbReference>
<dbReference type="PANTHER" id="PTHR21089:SF1">
    <property type="entry name" value="BIFUNCTIONAL 3-DEHYDROQUINATE DEHYDRATASE_SHIKIMATE DEHYDROGENASE, CHLOROPLASTIC"/>
    <property type="match status" value="1"/>
</dbReference>
<dbReference type="PANTHER" id="PTHR21089">
    <property type="entry name" value="SHIKIMATE DEHYDROGENASE"/>
    <property type="match status" value="1"/>
</dbReference>
<dbReference type="Pfam" id="PF18317">
    <property type="entry name" value="SDH_C"/>
    <property type="match status" value="1"/>
</dbReference>
<dbReference type="Pfam" id="PF01488">
    <property type="entry name" value="Shikimate_DH"/>
    <property type="match status" value="1"/>
</dbReference>
<dbReference type="Pfam" id="PF08501">
    <property type="entry name" value="Shikimate_dh_N"/>
    <property type="match status" value="1"/>
</dbReference>
<dbReference type="SUPFAM" id="SSF53223">
    <property type="entry name" value="Aminoacid dehydrogenase-like, N-terminal domain"/>
    <property type="match status" value="1"/>
</dbReference>
<dbReference type="SUPFAM" id="SSF51735">
    <property type="entry name" value="NAD(P)-binding Rossmann-fold domains"/>
    <property type="match status" value="1"/>
</dbReference>
<organism>
    <name type="scientific">Aquifex aeolicus (strain VF5)</name>
    <dbReference type="NCBI Taxonomy" id="224324"/>
    <lineage>
        <taxon>Bacteria</taxon>
        <taxon>Pseudomonadati</taxon>
        <taxon>Aquificota</taxon>
        <taxon>Aquificia</taxon>
        <taxon>Aquificales</taxon>
        <taxon>Aquificaceae</taxon>
        <taxon>Aquifex</taxon>
    </lineage>
</organism>
<evidence type="ECO:0000255" key="1">
    <source>
        <dbReference type="HAMAP-Rule" id="MF_00222"/>
    </source>
</evidence>
<evidence type="ECO:0000269" key="2">
    <source>
    </source>
</evidence>
<evidence type="ECO:0000303" key="3">
    <source>
    </source>
</evidence>
<evidence type="ECO:0000305" key="4">
    <source>
    </source>
</evidence>
<evidence type="ECO:0007829" key="5">
    <source>
        <dbReference type="PDB" id="2HK9"/>
    </source>
</evidence>